<comment type="function">
    <text evidence="1">One of two assembly initiator proteins, it binds directly to the 5'-end of the 23S rRNA, where it nucleates assembly of the 50S subunit.</text>
</comment>
<comment type="function">
    <text evidence="1">One of the proteins that surrounds the polypeptide exit tunnel on the outside of the subunit.</text>
</comment>
<comment type="subunit">
    <text evidence="1">Part of the 50S ribosomal subunit.</text>
</comment>
<comment type="similarity">
    <text evidence="1">Belongs to the universal ribosomal protein uL24 family.</text>
</comment>
<feature type="chain" id="PRO_1000165976" description="Large ribosomal subunit protein uL24">
    <location>
        <begin position="1"/>
        <end position="105"/>
    </location>
</feature>
<sequence length="105" mass="11411">MAAKIKKGDKVVVLTGRDKGRTGEVIQVMPKEERALVRGVNIVKRHQRQTANQEGGIISKEAPIQLSNVAVADPKDGKPTRVGFQVLEDGTKVRVAKRSGERIDG</sequence>
<dbReference type="EMBL" id="CP000781">
    <property type="protein sequence ID" value="ABS70005.1"/>
    <property type="molecule type" value="Genomic_DNA"/>
</dbReference>
<dbReference type="SMR" id="A7IPQ9"/>
<dbReference type="STRING" id="78245.Xaut_4787"/>
<dbReference type="KEGG" id="xau:Xaut_4787"/>
<dbReference type="eggNOG" id="COG0198">
    <property type="taxonomic scope" value="Bacteria"/>
</dbReference>
<dbReference type="HOGENOM" id="CLU_093315_2_2_5"/>
<dbReference type="OrthoDB" id="9807419at2"/>
<dbReference type="PhylomeDB" id="A7IPQ9"/>
<dbReference type="Proteomes" id="UP000002417">
    <property type="component" value="Chromosome"/>
</dbReference>
<dbReference type="GO" id="GO:1990904">
    <property type="term" value="C:ribonucleoprotein complex"/>
    <property type="evidence" value="ECO:0007669"/>
    <property type="project" value="UniProtKB-KW"/>
</dbReference>
<dbReference type="GO" id="GO:0005840">
    <property type="term" value="C:ribosome"/>
    <property type="evidence" value="ECO:0007669"/>
    <property type="project" value="UniProtKB-KW"/>
</dbReference>
<dbReference type="GO" id="GO:0019843">
    <property type="term" value="F:rRNA binding"/>
    <property type="evidence" value="ECO:0007669"/>
    <property type="project" value="UniProtKB-UniRule"/>
</dbReference>
<dbReference type="GO" id="GO:0003735">
    <property type="term" value="F:structural constituent of ribosome"/>
    <property type="evidence" value="ECO:0007669"/>
    <property type="project" value="InterPro"/>
</dbReference>
<dbReference type="GO" id="GO:0006412">
    <property type="term" value="P:translation"/>
    <property type="evidence" value="ECO:0007669"/>
    <property type="project" value="UniProtKB-UniRule"/>
</dbReference>
<dbReference type="CDD" id="cd06089">
    <property type="entry name" value="KOW_RPL26"/>
    <property type="match status" value="1"/>
</dbReference>
<dbReference type="FunFam" id="2.30.30.30:FF:000004">
    <property type="entry name" value="50S ribosomal protein L24"/>
    <property type="match status" value="1"/>
</dbReference>
<dbReference type="Gene3D" id="2.30.30.30">
    <property type="match status" value="1"/>
</dbReference>
<dbReference type="HAMAP" id="MF_01326_B">
    <property type="entry name" value="Ribosomal_uL24_B"/>
    <property type="match status" value="1"/>
</dbReference>
<dbReference type="InterPro" id="IPR005824">
    <property type="entry name" value="KOW"/>
</dbReference>
<dbReference type="InterPro" id="IPR014722">
    <property type="entry name" value="Rib_uL2_dom2"/>
</dbReference>
<dbReference type="InterPro" id="IPR003256">
    <property type="entry name" value="Ribosomal_uL24"/>
</dbReference>
<dbReference type="InterPro" id="IPR005825">
    <property type="entry name" value="Ribosomal_uL24_CS"/>
</dbReference>
<dbReference type="InterPro" id="IPR041988">
    <property type="entry name" value="Ribosomal_uL24_KOW"/>
</dbReference>
<dbReference type="InterPro" id="IPR008991">
    <property type="entry name" value="Translation_prot_SH3-like_sf"/>
</dbReference>
<dbReference type="NCBIfam" id="TIGR01079">
    <property type="entry name" value="rplX_bact"/>
    <property type="match status" value="1"/>
</dbReference>
<dbReference type="PANTHER" id="PTHR12903">
    <property type="entry name" value="MITOCHONDRIAL RIBOSOMAL PROTEIN L24"/>
    <property type="match status" value="1"/>
</dbReference>
<dbReference type="Pfam" id="PF00467">
    <property type="entry name" value="KOW"/>
    <property type="match status" value="1"/>
</dbReference>
<dbReference type="Pfam" id="PF17136">
    <property type="entry name" value="ribosomal_L24"/>
    <property type="match status" value="1"/>
</dbReference>
<dbReference type="SMART" id="SM00739">
    <property type="entry name" value="KOW"/>
    <property type="match status" value="1"/>
</dbReference>
<dbReference type="SUPFAM" id="SSF50104">
    <property type="entry name" value="Translation proteins SH3-like domain"/>
    <property type="match status" value="1"/>
</dbReference>
<dbReference type="PROSITE" id="PS01108">
    <property type="entry name" value="RIBOSOMAL_L24"/>
    <property type="match status" value="1"/>
</dbReference>
<organism>
    <name type="scientific">Xanthobacter autotrophicus (strain ATCC BAA-1158 / Py2)</name>
    <dbReference type="NCBI Taxonomy" id="78245"/>
    <lineage>
        <taxon>Bacteria</taxon>
        <taxon>Pseudomonadati</taxon>
        <taxon>Pseudomonadota</taxon>
        <taxon>Alphaproteobacteria</taxon>
        <taxon>Hyphomicrobiales</taxon>
        <taxon>Xanthobacteraceae</taxon>
        <taxon>Xanthobacter</taxon>
    </lineage>
</organism>
<accession>A7IPQ9</accession>
<evidence type="ECO:0000255" key="1">
    <source>
        <dbReference type="HAMAP-Rule" id="MF_01326"/>
    </source>
</evidence>
<evidence type="ECO:0000305" key="2"/>
<gene>
    <name evidence="1" type="primary">rplX</name>
    <name type="ordered locus">Xaut_4787</name>
</gene>
<proteinExistence type="inferred from homology"/>
<reference key="1">
    <citation type="submission" date="2007-07" db="EMBL/GenBank/DDBJ databases">
        <title>Complete sequence of chromosome of Xanthobacter autotrophicus Py2.</title>
        <authorList>
            <consortium name="US DOE Joint Genome Institute"/>
            <person name="Copeland A."/>
            <person name="Lucas S."/>
            <person name="Lapidus A."/>
            <person name="Barry K."/>
            <person name="Glavina del Rio T."/>
            <person name="Hammon N."/>
            <person name="Israni S."/>
            <person name="Dalin E."/>
            <person name="Tice H."/>
            <person name="Pitluck S."/>
            <person name="Sims D."/>
            <person name="Brettin T."/>
            <person name="Bruce D."/>
            <person name="Detter J.C."/>
            <person name="Han C."/>
            <person name="Tapia R."/>
            <person name="Brainard J."/>
            <person name="Schmutz J."/>
            <person name="Larimer F."/>
            <person name="Land M."/>
            <person name="Hauser L."/>
            <person name="Kyrpides N."/>
            <person name="Kim E."/>
            <person name="Ensigns S.A."/>
            <person name="Richardson P."/>
        </authorList>
    </citation>
    <scope>NUCLEOTIDE SEQUENCE [LARGE SCALE GENOMIC DNA]</scope>
    <source>
        <strain>ATCC BAA-1158 / Py2</strain>
    </source>
</reference>
<protein>
    <recommendedName>
        <fullName evidence="1">Large ribosomal subunit protein uL24</fullName>
    </recommendedName>
    <alternativeName>
        <fullName evidence="2">50S ribosomal protein L24</fullName>
    </alternativeName>
</protein>
<keyword id="KW-1185">Reference proteome</keyword>
<keyword id="KW-0687">Ribonucleoprotein</keyword>
<keyword id="KW-0689">Ribosomal protein</keyword>
<keyword id="KW-0694">RNA-binding</keyword>
<keyword id="KW-0699">rRNA-binding</keyword>
<name>RL24_XANP2</name>